<evidence type="ECO:0000250" key="1">
    <source>
        <dbReference type="UniProtKB" id="Q13347"/>
    </source>
</evidence>
<evidence type="ECO:0000255" key="2">
    <source>
        <dbReference type="HAMAP-Rule" id="MF_03008"/>
    </source>
</evidence>
<evidence type="ECO:0000269" key="3">
    <source>
    </source>
</evidence>
<evidence type="ECO:0000269" key="4">
    <source>
    </source>
</evidence>
<keyword id="KW-0007">Acetylation</keyword>
<keyword id="KW-0963">Cytoplasm</keyword>
<keyword id="KW-0903">Direct protein sequencing</keyword>
<keyword id="KW-0396">Initiation factor</keyword>
<keyword id="KW-1017">Isopeptide bond</keyword>
<keyword id="KW-0597">Phosphoprotein</keyword>
<keyword id="KW-0648">Protein biosynthesis</keyword>
<keyword id="KW-1185">Reference proteome</keyword>
<keyword id="KW-0677">Repeat</keyword>
<keyword id="KW-0832">Ubl conjugation</keyword>
<keyword id="KW-0853">WD repeat</keyword>
<protein>
    <recommendedName>
        <fullName evidence="2">Eukaryotic translation initiation factor 3 subunit I</fullName>
        <shortName evidence="2">eIF3i</shortName>
    </recommendedName>
    <alternativeName>
        <fullName evidence="2">Eukaryotic translation initiation factor 3 subunit 2</fullName>
    </alternativeName>
    <alternativeName>
        <fullName>TGF-beta receptor-interacting protein 1</fullName>
        <shortName>TRIP-1</shortName>
    </alternativeName>
    <alternativeName>
        <fullName evidence="2">eIF-3-beta</fullName>
    </alternativeName>
    <alternativeName>
        <fullName evidence="2">eIF3 p36</fullName>
    </alternativeName>
</protein>
<reference key="1">
    <citation type="submission" date="1999-09" db="EMBL/GenBank/DDBJ databases">
        <title>Mouse TRIP-1 gene isolated from murine L-929 cells.</title>
        <authorList>
            <person name="Zhou A."/>
            <person name="Silverman R.H."/>
        </authorList>
    </citation>
    <scope>NUCLEOTIDE SEQUENCE [MRNA]</scope>
</reference>
<reference key="2">
    <citation type="submission" date="2000-05" db="EMBL/GenBank/DDBJ databases">
        <title>Mus musculus TGF-beta receptor interacting protein 1 (TRIP1).</title>
        <authorList>
            <person name="Joseph P."/>
            <person name="Fan L."/>
            <person name="Whong W.-Z."/>
            <person name="Ong T.-M."/>
        </authorList>
    </citation>
    <scope>NUCLEOTIDE SEQUENCE [MRNA]</scope>
</reference>
<reference key="3">
    <citation type="journal article" date="2005" name="Science">
        <title>The transcriptional landscape of the mammalian genome.</title>
        <authorList>
            <person name="Carninci P."/>
            <person name="Kasukawa T."/>
            <person name="Katayama S."/>
            <person name="Gough J."/>
            <person name="Frith M.C."/>
            <person name="Maeda N."/>
            <person name="Oyama R."/>
            <person name="Ravasi T."/>
            <person name="Lenhard B."/>
            <person name="Wells C."/>
            <person name="Kodzius R."/>
            <person name="Shimokawa K."/>
            <person name="Bajic V.B."/>
            <person name="Brenner S.E."/>
            <person name="Batalov S."/>
            <person name="Forrest A.R."/>
            <person name="Zavolan M."/>
            <person name="Davis M.J."/>
            <person name="Wilming L.G."/>
            <person name="Aidinis V."/>
            <person name="Allen J.E."/>
            <person name="Ambesi-Impiombato A."/>
            <person name="Apweiler R."/>
            <person name="Aturaliya R.N."/>
            <person name="Bailey T.L."/>
            <person name="Bansal M."/>
            <person name="Baxter L."/>
            <person name="Beisel K.W."/>
            <person name="Bersano T."/>
            <person name="Bono H."/>
            <person name="Chalk A.M."/>
            <person name="Chiu K.P."/>
            <person name="Choudhary V."/>
            <person name="Christoffels A."/>
            <person name="Clutterbuck D.R."/>
            <person name="Crowe M.L."/>
            <person name="Dalla E."/>
            <person name="Dalrymple B.P."/>
            <person name="de Bono B."/>
            <person name="Della Gatta G."/>
            <person name="di Bernardo D."/>
            <person name="Down T."/>
            <person name="Engstrom P."/>
            <person name="Fagiolini M."/>
            <person name="Faulkner G."/>
            <person name="Fletcher C.F."/>
            <person name="Fukushima T."/>
            <person name="Furuno M."/>
            <person name="Futaki S."/>
            <person name="Gariboldi M."/>
            <person name="Georgii-Hemming P."/>
            <person name="Gingeras T.R."/>
            <person name="Gojobori T."/>
            <person name="Green R.E."/>
            <person name="Gustincich S."/>
            <person name="Harbers M."/>
            <person name="Hayashi Y."/>
            <person name="Hensch T.K."/>
            <person name="Hirokawa N."/>
            <person name="Hill D."/>
            <person name="Huminiecki L."/>
            <person name="Iacono M."/>
            <person name="Ikeo K."/>
            <person name="Iwama A."/>
            <person name="Ishikawa T."/>
            <person name="Jakt M."/>
            <person name="Kanapin A."/>
            <person name="Katoh M."/>
            <person name="Kawasawa Y."/>
            <person name="Kelso J."/>
            <person name="Kitamura H."/>
            <person name="Kitano H."/>
            <person name="Kollias G."/>
            <person name="Krishnan S.P."/>
            <person name="Kruger A."/>
            <person name="Kummerfeld S.K."/>
            <person name="Kurochkin I.V."/>
            <person name="Lareau L.F."/>
            <person name="Lazarevic D."/>
            <person name="Lipovich L."/>
            <person name="Liu J."/>
            <person name="Liuni S."/>
            <person name="McWilliam S."/>
            <person name="Madan Babu M."/>
            <person name="Madera M."/>
            <person name="Marchionni L."/>
            <person name="Matsuda H."/>
            <person name="Matsuzawa S."/>
            <person name="Miki H."/>
            <person name="Mignone F."/>
            <person name="Miyake S."/>
            <person name="Morris K."/>
            <person name="Mottagui-Tabar S."/>
            <person name="Mulder N."/>
            <person name="Nakano N."/>
            <person name="Nakauchi H."/>
            <person name="Ng P."/>
            <person name="Nilsson R."/>
            <person name="Nishiguchi S."/>
            <person name="Nishikawa S."/>
            <person name="Nori F."/>
            <person name="Ohara O."/>
            <person name="Okazaki Y."/>
            <person name="Orlando V."/>
            <person name="Pang K.C."/>
            <person name="Pavan W.J."/>
            <person name="Pavesi G."/>
            <person name="Pesole G."/>
            <person name="Petrovsky N."/>
            <person name="Piazza S."/>
            <person name="Reed J."/>
            <person name="Reid J.F."/>
            <person name="Ring B.Z."/>
            <person name="Ringwald M."/>
            <person name="Rost B."/>
            <person name="Ruan Y."/>
            <person name="Salzberg S.L."/>
            <person name="Sandelin A."/>
            <person name="Schneider C."/>
            <person name="Schoenbach C."/>
            <person name="Sekiguchi K."/>
            <person name="Semple C.A."/>
            <person name="Seno S."/>
            <person name="Sessa L."/>
            <person name="Sheng Y."/>
            <person name="Shibata Y."/>
            <person name="Shimada H."/>
            <person name="Shimada K."/>
            <person name="Silva D."/>
            <person name="Sinclair B."/>
            <person name="Sperling S."/>
            <person name="Stupka E."/>
            <person name="Sugiura K."/>
            <person name="Sultana R."/>
            <person name="Takenaka Y."/>
            <person name="Taki K."/>
            <person name="Tammoja K."/>
            <person name="Tan S.L."/>
            <person name="Tang S."/>
            <person name="Taylor M.S."/>
            <person name="Tegner J."/>
            <person name="Teichmann S.A."/>
            <person name="Ueda H.R."/>
            <person name="van Nimwegen E."/>
            <person name="Verardo R."/>
            <person name="Wei C.L."/>
            <person name="Yagi K."/>
            <person name="Yamanishi H."/>
            <person name="Zabarovsky E."/>
            <person name="Zhu S."/>
            <person name="Zimmer A."/>
            <person name="Hide W."/>
            <person name="Bult C."/>
            <person name="Grimmond S.M."/>
            <person name="Teasdale R.D."/>
            <person name="Liu E.T."/>
            <person name="Brusic V."/>
            <person name="Quackenbush J."/>
            <person name="Wahlestedt C."/>
            <person name="Mattick J.S."/>
            <person name="Hume D.A."/>
            <person name="Kai C."/>
            <person name="Sasaki D."/>
            <person name="Tomaru Y."/>
            <person name="Fukuda S."/>
            <person name="Kanamori-Katayama M."/>
            <person name="Suzuki M."/>
            <person name="Aoki J."/>
            <person name="Arakawa T."/>
            <person name="Iida J."/>
            <person name="Imamura K."/>
            <person name="Itoh M."/>
            <person name="Kato T."/>
            <person name="Kawaji H."/>
            <person name="Kawagashira N."/>
            <person name="Kawashima T."/>
            <person name="Kojima M."/>
            <person name="Kondo S."/>
            <person name="Konno H."/>
            <person name="Nakano K."/>
            <person name="Ninomiya N."/>
            <person name="Nishio T."/>
            <person name="Okada M."/>
            <person name="Plessy C."/>
            <person name="Shibata K."/>
            <person name="Shiraki T."/>
            <person name="Suzuki S."/>
            <person name="Tagami M."/>
            <person name="Waki K."/>
            <person name="Watahiki A."/>
            <person name="Okamura-Oho Y."/>
            <person name="Suzuki H."/>
            <person name="Kawai J."/>
            <person name="Hayashizaki Y."/>
        </authorList>
    </citation>
    <scope>NUCLEOTIDE SEQUENCE [LARGE SCALE MRNA]</scope>
    <source>
        <strain>C57BL/6J</strain>
        <tissue>Embryo</tissue>
        <tissue>Embryonic stem cell</tissue>
        <tissue>Kidney</tissue>
    </source>
</reference>
<reference key="4">
    <citation type="journal article" date="2004" name="Genome Res.">
        <title>The status, quality, and expansion of the NIH full-length cDNA project: the Mammalian Gene Collection (MGC).</title>
        <authorList>
            <consortium name="The MGC Project Team"/>
        </authorList>
    </citation>
    <scope>NUCLEOTIDE SEQUENCE [LARGE SCALE MRNA]</scope>
    <source>
        <strain>C57BL/6J</strain>
        <tissue>Mammary gland</tissue>
    </source>
</reference>
<reference key="5">
    <citation type="submission" date="2007-07" db="UniProtKB">
        <authorList>
            <person name="Lubec G."/>
            <person name="Yang J.W."/>
            <person name="Zigmond M."/>
        </authorList>
    </citation>
    <scope>PROTEIN SEQUENCE OF 269-280</scope>
    <source>
        <tissue>Brain</tissue>
    </source>
</reference>
<reference key="6">
    <citation type="journal article" date="2006" name="EMBO J.">
        <title>mTOR-dependent stimulation of the association of eIF4G and eIF3 by insulin.</title>
        <authorList>
            <person name="Harris T.E."/>
            <person name="Chi A."/>
            <person name="Shabanowitz J."/>
            <person name="Hunt D.F."/>
            <person name="Rhoads R.E."/>
            <person name="Lawrence J.C. Jr."/>
        </authorList>
    </citation>
    <scope>INTERACTION WITH EIF3B AND EIF4G1</scope>
</reference>
<reference key="7">
    <citation type="journal article" date="2007" name="EMBO J.">
        <title>Reconstitution reveals the functional core of mammalian eIF3.</title>
        <authorList>
            <person name="Masutani M."/>
            <person name="Sonenberg N."/>
            <person name="Yokoyama S."/>
            <person name="Imataka H."/>
        </authorList>
    </citation>
    <scope>FUNCTION</scope>
    <scope>CHARACTERIZATION OF THE EIF-3 COMPLEX</scope>
    <scope>IDENTIFICATION IN THE EIF-3 COMPLEX</scope>
    <scope>IDENTIFICATION BY MASS SPECTROMETRY</scope>
</reference>
<reference key="8">
    <citation type="journal article" date="2010" name="Cell">
        <title>A tissue-specific atlas of mouse protein phosphorylation and expression.</title>
        <authorList>
            <person name="Huttlin E.L."/>
            <person name="Jedrychowski M.P."/>
            <person name="Elias J.E."/>
            <person name="Goswami T."/>
            <person name="Rad R."/>
            <person name="Beausoleil S.A."/>
            <person name="Villen J."/>
            <person name="Haas W."/>
            <person name="Sowa M.E."/>
            <person name="Gygi S.P."/>
        </authorList>
    </citation>
    <scope>IDENTIFICATION BY MASS SPECTROMETRY [LARGE SCALE ANALYSIS]</scope>
    <source>
        <tissue>Brain</tissue>
        <tissue>Brown adipose tissue</tissue>
        <tissue>Heart</tissue>
        <tissue>Kidney</tissue>
        <tissue>Liver</tissue>
        <tissue>Lung</tissue>
        <tissue>Pancreas</tissue>
        <tissue>Spleen</tissue>
        <tissue>Testis</tissue>
    </source>
</reference>
<accession>Q9QZD9</accession>
<name>EIF3I_MOUSE</name>
<dbReference type="EMBL" id="AF188297">
    <property type="protein sequence ID" value="AAF01455.1"/>
    <property type="molecule type" value="mRNA"/>
</dbReference>
<dbReference type="EMBL" id="AF271072">
    <property type="protein sequence ID" value="AAF76199.1"/>
    <property type="molecule type" value="mRNA"/>
</dbReference>
<dbReference type="EMBL" id="AK012375">
    <property type="protein sequence ID" value="BAB28197.1"/>
    <property type="molecule type" value="mRNA"/>
</dbReference>
<dbReference type="EMBL" id="AK002896">
    <property type="protein sequence ID" value="BAB22440.1"/>
    <property type="molecule type" value="mRNA"/>
</dbReference>
<dbReference type="EMBL" id="AK010781">
    <property type="protein sequence ID" value="BAB27177.1"/>
    <property type="molecule type" value="mRNA"/>
</dbReference>
<dbReference type="EMBL" id="BC029625">
    <property type="protein sequence ID" value="AAH29625.1"/>
    <property type="molecule type" value="mRNA"/>
</dbReference>
<dbReference type="CCDS" id="CCDS18698.1"/>
<dbReference type="RefSeq" id="NP_061269.1">
    <property type="nucleotide sequence ID" value="NM_018799.2"/>
</dbReference>
<dbReference type="SMR" id="Q9QZD9"/>
<dbReference type="BioGRID" id="207720">
    <property type="interactions" value="85"/>
</dbReference>
<dbReference type="FunCoup" id="Q9QZD9">
    <property type="interactions" value="2108"/>
</dbReference>
<dbReference type="IntAct" id="Q9QZD9">
    <property type="interactions" value="60"/>
</dbReference>
<dbReference type="MINT" id="Q9QZD9"/>
<dbReference type="STRING" id="10090.ENSMUSP00000099653"/>
<dbReference type="GlyGen" id="Q9QZD9">
    <property type="glycosylation" value="1 site, 1 O-linked glycan (1 site)"/>
</dbReference>
<dbReference type="iPTMnet" id="Q9QZD9"/>
<dbReference type="PhosphoSitePlus" id="Q9QZD9"/>
<dbReference type="SwissPalm" id="Q9QZD9"/>
<dbReference type="REPRODUCTION-2DPAGE" id="Q9QZD9"/>
<dbReference type="CPTAC" id="non-CPTAC-3913"/>
<dbReference type="jPOST" id="Q9QZD9"/>
<dbReference type="PaxDb" id="10090-ENSMUSP00000099653"/>
<dbReference type="PeptideAtlas" id="Q9QZD9"/>
<dbReference type="ProteomicsDB" id="277775"/>
<dbReference type="Pumba" id="Q9QZD9"/>
<dbReference type="DNASU" id="54709"/>
<dbReference type="Ensembl" id="ENSMUST00000102593.11">
    <property type="protein sequence ID" value="ENSMUSP00000099653.5"/>
    <property type="gene ID" value="ENSMUSG00000028798.17"/>
</dbReference>
<dbReference type="GeneID" id="54709"/>
<dbReference type="KEGG" id="mmu:54709"/>
<dbReference type="UCSC" id="uc008uxm.2">
    <property type="organism name" value="mouse"/>
</dbReference>
<dbReference type="AGR" id="MGI:1860763"/>
<dbReference type="CTD" id="8668"/>
<dbReference type="MGI" id="MGI:1860763">
    <property type="gene designation" value="Eif3i"/>
</dbReference>
<dbReference type="VEuPathDB" id="HostDB:ENSMUSG00000028798"/>
<dbReference type="eggNOG" id="KOG0643">
    <property type="taxonomic scope" value="Eukaryota"/>
</dbReference>
<dbReference type="GeneTree" id="ENSGT00940000161371"/>
<dbReference type="HOGENOM" id="CLU_043845_0_0_1"/>
<dbReference type="InParanoid" id="Q9QZD9"/>
<dbReference type="OMA" id="VWFSHNG"/>
<dbReference type="OrthoDB" id="24966at2759"/>
<dbReference type="PhylomeDB" id="Q9QZD9"/>
<dbReference type="TreeFam" id="TF101515"/>
<dbReference type="Reactome" id="R-MMU-156827">
    <property type="pathway name" value="L13a-mediated translational silencing of Ceruloplasmin expression"/>
</dbReference>
<dbReference type="Reactome" id="R-MMU-72649">
    <property type="pathway name" value="Translation initiation complex formation"/>
</dbReference>
<dbReference type="Reactome" id="R-MMU-72689">
    <property type="pathway name" value="Formation of a pool of free 40S subunits"/>
</dbReference>
<dbReference type="Reactome" id="R-MMU-72695">
    <property type="pathway name" value="Formation of the ternary complex, and subsequently, the 43S complex"/>
</dbReference>
<dbReference type="Reactome" id="R-MMU-72702">
    <property type="pathway name" value="Ribosomal scanning and start codon recognition"/>
</dbReference>
<dbReference type="Reactome" id="R-MMU-72706">
    <property type="pathway name" value="GTP hydrolysis and joining of the 60S ribosomal subunit"/>
</dbReference>
<dbReference type="BioGRID-ORCS" id="54709">
    <property type="hits" value="26 hits in 74 CRISPR screens"/>
</dbReference>
<dbReference type="ChiTaRS" id="Eif3i">
    <property type="organism name" value="mouse"/>
</dbReference>
<dbReference type="PRO" id="PR:Q9QZD9"/>
<dbReference type="Proteomes" id="UP000000589">
    <property type="component" value="Chromosome 4"/>
</dbReference>
<dbReference type="RNAct" id="Q9QZD9">
    <property type="molecule type" value="protein"/>
</dbReference>
<dbReference type="Bgee" id="ENSMUSG00000028798">
    <property type="expression patterns" value="Expressed in floor plate of midbrain and 245 other cell types or tissues"/>
</dbReference>
<dbReference type="ExpressionAtlas" id="Q9QZD9">
    <property type="expression patterns" value="baseline and differential"/>
</dbReference>
<dbReference type="GO" id="GO:0016282">
    <property type="term" value="C:eukaryotic 43S preinitiation complex"/>
    <property type="evidence" value="ECO:0007669"/>
    <property type="project" value="UniProtKB-UniRule"/>
</dbReference>
<dbReference type="GO" id="GO:0033290">
    <property type="term" value="C:eukaryotic 48S preinitiation complex"/>
    <property type="evidence" value="ECO:0007669"/>
    <property type="project" value="UniProtKB-UniRule"/>
</dbReference>
<dbReference type="GO" id="GO:0005852">
    <property type="term" value="C:eukaryotic translation initiation factor 3 complex"/>
    <property type="evidence" value="ECO:0000314"/>
    <property type="project" value="UniProtKB"/>
</dbReference>
<dbReference type="GO" id="GO:0071541">
    <property type="term" value="C:eukaryotic translation initiation factor 3 complex, eIF3m"/>
    <property type="evidence" value="ECO:0000314"/>
    <property type="project" value="MGI"/>
</dbReference>
<dbReference type="GO" id="GO:0045202">
    <property type="term" value="C:synapse"/>
    <property type="evidence" value="ECO:0000314"/>
    <property type="project" value="SynGO"/>
</dbReference>
<dbReference type="GO" id="GO:0003743">
    <property type="term" value="F:translation initiation factor activity"/>
    <property type="evidence" value="ECO:0007669"/>
    <property type="project" value="UniProtKB-UniRule"/>
</dbReference>
<dbReference type="GO" id="GO:0001732">
    <property type="term" value="P:formation of cytoplasmic translation initiation complex"/>
    <property type="evidence" value="ECO:0007669"/>
    <property type="project" value="UniProtKB-UniRule"/>
</dbReference>
<dbReference type="GO" id="GO:0006413">
    <property type="term" value="P:translational initiation"/>
    <property type="evidence" value="ECO:0000314"/>
    <property type="project" value="UniProtKB"/>
</dbReference>
<dbReference type="FunFam" id="2.130.10.10:FF:000127">
    <property type="entry name" value="Eukaryotic translation initiation factor 3 subunit I"/>
    <property type="match status" value="1"/>
</dbReference>
<dbReference type="Gene3D" id="2.130.10.10">
    <property type="entry name" value="YVTN repeat-like/Quinoprotein amine dehydrogenase"/>
    <property type="match status" value="1"/>
</dbReference>
<dbReference type="HAMAP" id="MF_03008">
    <property type="entry name" value="eIF3i"/>
    <property type="match status" value="1"/>
</dbReference>
<dbReference type="InterPro" id="IPR027525">
    <property type="entry name" value="eIF3i"/>
</dbReference>
<dbReference type="InterPro" id="IPR015943">
    <property type="entry name" value="WD40/YVTN_repeat-like_dom_sf"/>
</dbReference>
<dbReference type="InterPro" id="IPR019775">
    <property type="entry name" value="WD40_repeat_CS"/>
</dbReference>
<dbReference type="InterPro" id="IPR036322">
    <property type="entry name" value="WD40_repeat_dom_sf"/>
</dbReference>
<dbReference type="InterPro" id="IPR001680">
    <property type="entry name" value="WD40_rpt"/>
</dbReference>
<dbReference type="PANTHER" id="PTHR19877">
    <property type="entry name" value="EUKARYOTIC TRANSLATION INITIATION FACTOR 3 SUBUNIT I"/>
    <property type="match status" value="1"/>
</dbReference>
<dbReference type="PANTHER" id="PTHR19877:SF1">
    <property type="entry name" value="EUKARYOTIC TRANSLATION INITIATION FACTOR 3 SUBUNIT I"/>
    <property type="match status" value="1"/>
</dbReference>
<dbReference type="Pfam" id="PF24805">
    <property type="entry name" value="EIF3I"/>
    <property type="match status" value="1"/>
</dbReference>
<dbReference type="SMART" id="SM00320">
    <property type="entry name" value="WD40"/>
    <property type="match status" value="5"/>
</dbReference>
<dbReference type="SUPFAM" id="SSF50978">
    <property type="entry name" value="WD40 repeat-like"/>
    <property type="match status" value="1"/>
</dbReference>
<dbReference type="PROSITE" id="PS00678">
    <property type="entry name" value="WD_REPEATS_1"/>
    <property type="match status" value="1"/>
</dbReference>
<dbReference type="PROSITE" id="PS50082">
    <property type="entry name" value="WD_REPEATS_2"/>
    <property type="match status" value="4"/>
</dbReference>
<dbReference type="PROSITE" id="PS50294">
    <property type="entry name" value="WD_REPEATS_REGION"/>
    <property type="match status" value="2"/>
</dbReference>
<gene>
    <name type="primary">Eif3i</name>
    <name type="synonym">Eif3s2</name>
    <name type="synonym">Trip1</name>
</gene>
<organism>
    <name type="scientific">Mus musculus</name>
    <name type="common">Mouse</name>
    <dbReference type="NCBI Taxonomy" id="10090"/>
    <lineage>
        <taxon>Eukaryota</taxon>
        <taxon>Metazoa</taxon>
        <taxon>Chordata</taxon>
        <taxon>Craniata</taxon>
        <taxon>Vertebrata</taxon>
        <taxon>Euteleostomi</taxon>
        <taxon>Mammalia</taxon>
        <taxon>Eutheria</taxon>
        <taxon>Euarchontoglires</taxon>
        <taxon>Glires</taxon>
        <taxon>Rodentia</taxon>
        <taxon>Myomorpha</taxon>
        <taxon>Muroidea</taxon>
        <taxon>Muridae</taxon>
        <taxon>Murinae</taxon>
        <taxon>Mus</taxon>
        <taxon>Mus</taxon>
    </lineage>
</organism>
<feature type="chain" id="PRO_0000051037" description="Eukaryotic translation initiation factor 3 subunit I">
    <location>
        <begin position="1"/>
        <end position="325"/>
    </location>
</feature>
<feature type="repeat" description="WD 1">
    <location>
        <begin position="8"/>
        <end position="47"/>
    </location>
</feature>
<feature type="repeat" description="WD 2">
    <location>
        <begin position="50"/>
        <end position="91"/>
    </location>
</feature>
<feature type="repeat" description="WD 3">
    <location>
        <begin position="144"/>
        <end position="183"/>
    </location>
</feature>
<feature type="repeat" description="WD 4">
    <location>
        <begin position="186"/>
        <end position="225"/>
    </location>
</feature>
<feature type="repeat" description="WD 5">
    <location>
        <begin position="283"/>
        <end position="324"/>
    </location>
</feature>
<feature type="modified residue" description="Phosphothreonine" evidence="1">
    <location>
        <position position="219"/>
    </location>
</feature>
<feature type="modified residue" description="N6-acetyllysine" evidence="1">
    <location>
        <position position="264"/>
    </location>
</feature>
<feature type="modified residue" description="Phosphotyrosine" evidence="1">
    <location>
        <position position="308"/>
    </location>
</feature>
<feature type="cross-link" description="Glycyl lysine isopeptide (Lys-Gly) (interchain with G-Cter in ubiquitin)" evidence="1">
    <location>
        <position position="282"/>
    </location>
</feature>
<proteinExistence type="evidence at protein level"/>
<comment type="function">
    <text evidence="2 4">Component of the eukaryotic translation initiation factor 3 (eIF-3) complex, which is required for several steps in the initiation of protein synthesis. The eIF-3 complex associates with the 40S ribosome and facilitates the recruitment of eIF-1, eIF-1A, eIF-2:GTP:methionyl-tRNAi and eIF-5 to form the 43S pre-initiation complex (43S PIC). The eIF-3 complex stimulates mRNA recruitment to the 43S PIC and scanning of the mRNA for AUG recognition. The eIF-3 complex is also required for disassembly and recycling of post-termination ribosomal complexes and subsequently prevents premature joining of the 40S and 60S ribosomal subunits prior to initiation. The eIF-3 complex specifically targets and initiates translation of a subset of mRNAs involved in cell proliferation, including cell cycling, differentiation and apoptosis, and uses different modes of RNA stem-loop binding to exert either translational activation or repression.</text>
</comment>
<comment type="subunit">
    <text evidence="2 3 4">Component of the eukaryotic translation initiation factor 3 (eIF-3) complex, which is composed of 13 subunits: EIF3A, EIF3B, EIF3C, EIF3D, EIF3E, EIF3F, EIF3G, EIF3H, EIF3I, EIF3J, EIF3K, EIF3L and EIF3M. The eIF-3 complex appears to include 3 stable modules: module A is composed of EIF3A, EIF3B, EIF3G and EIF3I; module B is composed of EIF3F, EIF3H, and EIF3M; and module C is composed of EIF3C, EIF3D, EIF3E, EIF3K and EIF3L. EIF3C of module C binds EIF3B of module A and EIF3H of module B, thereby linking the three modules. EIF3J is a labile subunit that binds to the eIF-3 complex via EIF3B. The eIF-3 complex may interact with RPS6KB1 under conditions of nutrient depletion. Mitogenic stimulation may lead to binding and activation of a complex composed of MTOR and RPTOR, leading to phosphorylation and release of RPS6KB1 and binding of EIF4B to eIF-3.</text>
</comment>
<comment type="interaction">
    <interactant intactId="EBI-7466616">
        <id>Q9QZD9</id>
    </interactant>
    <interactant intactId="EBI-8175606">
        <id>Q6NZJ6</id>
        <label>Eif4g1</label>
    </interactant>
    <organismsDiffer>false</organismsDiffer>
    <experiments>3</experiments>
</comment>
<comment type="subcellular location">
    <subcellularLocation>
        <location evidence="2">Cytoplasm</location>
    </subcellularLocation>
</comment>
<comment type="PTM">
    <text evidence="2">Phosphorylated by TGF-beta type II receptor.</text>
</comment>
<comment type="similarity">
    <text evidence="2">Belongs to the eIF-3 subunit I family.</text>
</comment>
<sequence length="325" mass="36461">MKPILLQGHERSITQIKYNREGDLLFTVAKDPIVNVWYSVNGERLGTYMGHTGAVWCVDADWDTKHVLTGSADNSCRLWDCETGKQLALLKTNSAVRTCGFDFGGNIIMFSTDKQMGYQCFVSFFDLRDPSQIDSNEPYMKIPCNDSKITSAVWGPLGECVIAGHESGELNQYSAKSGEVLVNVKEHSRQINDIQLSRDMTMFVTASKDNTAKLFDSTTLEHQKTFRTERPVNSAALSPNYDHVVLGGGQEAMDVTTTSTRIGKFEARFFHLAFEEEFGRVKGHFGPINSVAFHPDGKSYSSGGEDGYVRIHYFDPQYFEFEFEA</sequence>